<proteinExistence type="inferred from homology"/>
<name>YCF4_SOLTU</name>
<organism>
    <name type="scientific">Solanum tuberosum</name>
    <name type="common">Potato</name>
    <dbReference type="NCBI Taxonomy" id="4113"/>
    <lineage>
        <taxon>Eukaryota</taxon>
        <taxon>Viridiplantae</taxon>
        <taxon>Streptophyta</taxon>
        <taxon>Embryophyta</taxon>
        <taxon>Tracheophyta</taxon>
        <taxon>Spermatophyta</taxon>
        <taxon>Magnoliopsida</taxon>
        <taxon>eudicotyledons</taxon>
        <taxon>Gunneridae</taxon>
        <taxon>Pentapetalae</taxon>
        <taxon>asterids</taxon>
        <taxon>lamiids</taxon>
        <taxon>Solanales</taxon>
        <taxon>Solanaceae</taxon>
        <taxon>Solanoideae</taxon>
        <taxon>Solaneae</taxon>
        <taxon>Solanum</taxon>
    </lineage>
</organism>
<sequence length="184" mass="21388">MTWRSDDIWIELITGSRKISNFCWALILFLGSLGFLLVGTSSYLGRNLLSFFPPQQIIFFPQGIVMSFYGIAGLFISSYLWCTISWNVGSGYDRFDRKEGIVCIFRWGFPGKNRRIFLRFLIKDIQSVRIEVKEGIYARRVLYMDIRGQGSIPLTRTDENLTPREIEQKAAELAYFLRVPIEVF</sequence>
<reference key="1">
    <citation type="journal article" date="2006" name="Plant Cell Rep.">
        <title>The complete chloroplast genome sequences of Solanum tuberosum and comparative analysis with Solanaceae species identified the presence of a 241-bp deletion in cultivated potato chloroplast DNA sequence.</title>
        <authorList>
            <person name="Chung H.-J."/>
            <person name="Jung J.D."/>
            <person name="Park H.-W."/>
            <person name="Kim J.-H."/>
            <person name="Cha H.W."/>
            <person name="Min S.R."/>
            <person name="Jeong W.-J."/>
            <person name="Liu J.R."/>
        </authorList>
    </citation>
    <scope>NUCLEOTIDE SEQUENCE [LARGE SCALE GENOMIC DNA]</scope>
    <source>
        <strain>cv. Desiree</strain>
    </source>
</reference>
<reference key="2">
    <citation type="submission" date="2006-02" db="EMBL/GenBank/DDBJ databases">
        <title>Complete chloroplast genome sequences of Solanum tuberosum cultivar Desiree and comparative analyses with other Solanaceae genomes.</title>
        <authorList>
            <person name="Gargano D."/>
            <person name="Scotti N."/>
            <person name="Vezzi A."/>
            <person name="Bilardi A."/>
            <person name="Valle G."/>
            <person name="Grillo S."/>
            <person name="Cardi T."/>
        </authorList>
    </citation>
    <scope>NUCLEOTIDE SEQUENCE [LARGE SCALE GENOMIC DNA]</scope>
    <source>
        <strain>cv. Desiree</strain>
    </source>
</reference>
<geneLocation type="chloroplast"/>
<evidence type="ECO:0000255" key="1">
    <source>
        <dbReference type="HAMAP-Rule" id="MF_00437"/>
    </source>
</evidence>
<keyword id="KW-0150">Chloroplast</keyword>
<keyword id="KW-0472">Membrane</keyword>
<keyword id="KW-0602">Photosynthesis</keyword>
<keyword id="KW-0934">Plastid</keyword>
<keyword id="KW-1185">Reference proteome</keyword>
<keyword id="KW-0793">Thylakoid</keyword>
<keyword id="KW-0812">Transmembrane</keyword>
<keyword id="KW-1133">Transmembrane helix</keyword>
<dbReference type="EMBL" id="DQ231562">
    <property type="protein sequence ID" value="ABB90052.1"/>
    <property type="molecule type" value="Genomic_DNA"/>
</dbReference>
<dbReference type="EMBL" id="DQ386163">
    <property type="protein sequence ID" value="ABD47068.1"/>
    <property type="molecule type" value="Genomic_DNA"/>
</dbReference>
<dbReference type="RefSeq" id="YP_635650.1">
    <property type="nucleotide sequence ID" value="NC_008096.2"/>
</dbReference>
<dbReference type="FunCoup" id="Q2VEG6">
    <property type="interactions" value="80"/>
</dbReference>
<dbReference type="STRING" id="4113.Q2VEG6"/>
<dbReference type="GeneID" id="4099988"/>
<dbReference type="KEGG" id="sot:4099988"/>
<dbReference type="InParanoid" id="Q2VEG6"/>
<dbReference type="OrthoDB" id="1287926at2759"/>
<dbReference type="Proteomes" id="UP000011115">
    <property type="component" value="Unassembled WGS sequence"/>
</dbReference>
<dbReference type="GO" id="GO:0009535">
    <property type="term" value="C:chloroplast thylakoid membrane"/>
    <property type="evidence" value="ECO:0007669"/>
    <property type="project" value="UniProtKB-SubCell"/>
</dbReference>
<dbReference type="GO" id="GO:0009522">
    <property type="term" value="C:photosystem I"/>
    <property type="evidence" value="ECO:0007669"/>
    <property type="project" value="InterPro"/>
</dbReference>
<dbReference type="GO" id="GO:0015979">
    <property type="term" value="P:photosynthesis"/>
    <property type="evidence" value="ECO:0007669"/>
    <property type="project" value="UniProtKB-UniRule"/>
</dbReference>
<dbReference type="HAMAP" id="MF_00437">
    <property type="entry name" value="Ycf4"/>
    <property type="match status" value="1"/>
</dbReference>
<dbReference type="InterPro" id="IPR003359">
    <property type="entry name" value="PSI_Ycf4_assembly"/>
</dbReference>
<dbReference type="NCBIfam" id="NF002712">
    <property type="entry name" value="PRK02542.1"/>
    <property type="match status" value="1"/>
</dbReference>
<dbReference type="PANTHER" id="PTHR33288">
    <property type="match status" value="1"/>
</dbReference>
<dbReference type="PANTHER" id="PTHR33288:SF4">
    <property type="entry name" value="PHOTOSYSTEM I ASSEMBLY PROTEIN YCF4"/>
    <property type="match status" value="1"/>
</dbReference>
<dbReference type="Pfam" id="PF02392">
    <property type="entry name" value="Ycf4"/>
    <property type="match status" value="1"/>
</dbReference>
<protein>
    <recommendedName>
        <fullName evidence="1">Photosystem I assembly protein Ycf4</fullName>
    </recommendedName>
</protein>
<feature type="chain" id="PRO_0000275673" description="Photosystem I assembly protein Ycf4">
    <location>
        <begin position="1"/>
        <end position="184"/>
    </location>
</feature>
<feature type="transmembrane region" description="Helical" evidence="1">
    <location>
        <begin position="19"/>
        <end position="39"/>
    </location>
</feature>
<feature type="transmembrane region" description="Helical" evidence="1">
    <location>
        <begin position="57"/>
        <end position="77"/>
    </location>
</feature>
<accession>Q2VEG6</accession>
<gene>
    <name evidence="1" type="primary">ycf4</name>
</gene>
<comment type="function">
    <text evidence="1">Seems to be required for the assembly of the photosystem I complex.</text>
</comment>
<comment type="subcellular location">
    <subcellularLocation>
        <location evidence="1">Plastid</location>
        <location evidence="1">Chloroplast thylakoid membrane</location>
        <topology evidence="1">Multi-pass membrane protein</topology>
    </subcellularLocation>
</comment>
<comment type="similarity">
    <text evidence="1">Belongs to the Ycf4 family.</text>
</comment>